<comment type="function">
    <text evidence="1">Malate transporter.</text>
</comment>
<comment type="subcellular location">
    <subcellularLocation>
        <location evidence="4">Membrane</location>
        <topology evidence="4">Multi-pass membrane protein</topology>
    </subcellularLocation>
</comment>
<comment type="similarity">
    <text evidence="4">Belongs to the aromatic acid exporter (TC 2.A.85) family.</text>
</comment>
<accession>Q9XIN1</accession>
<feature type="chain" id="PRO_0000401466" description="Aluminum-activated malate transporter 7">
    <location>
        <begin position="1"/>
        <end position="506"/>
    </location>
</feature>
<feature type="transmembrane region" description="Helical" evidence="2">
    <location>
        <begin position="28"/>
        <end position="48"/>
    </location>
</feature>
<feature type="transmembrane region" description="Helical" evidence="2">
    <location>
        <begin position="52"/>
        <end position="72"/>
    </location>
</feature>
<feature type="transmembrane region" description="Helical" evidence="2">
    <location>
        <begin position="78"/>
        <end position="98"/>
    </location>
</feature>
<feature type="transmembrane region" description="Helical" evidence="2">
    <location>
        <begin position="104"/>
        <end position="124"/>
    </location>
</feature>
<feature type="transmembrane region" description="Helical" evidence="2">
    <location>
        <begin position="130"/>
        <end position="150"/>
    </location>
</feature>
<feature type="transmembrane region" description="Helical" evidence="2">
    <location>
        <begin position="166"/>
        <end position="186"/>
    </location>
</feature>
<feature type="region of interest" description="Disordered" evidence="3">
    <location>
        <begin position="461"/>
        <end position="485"/>
    </location>
</feature>
<feature type="compositionally biased region" description="Basic and acidic residues" evidence="3">
    <location>
        <begin position="467"/>
        <end position="485"/>
    </location>
</feature>
<dbReference type="EMBL" id="AC006233">
    <property type="protein sequence ID" value="AAD42005.1"/>
    <property type="molecule type" value="Genomic_DNA"/>
</dbReference>
<dbReference type="EMBL" id="CP002685">
    <property type="protein sequence ID" value="AEC07961.1"/>
    <property type="molecule type" value="Genomic_DNA"/>
</dbReference>
<dbReference type="PIR" id="E84670">
    <property type="entry name" value="E84670"/>
</dbReference>
<dbReference type="RefSeq" id="NP_180292.1">
    <property type="nucleotide sequence ID" value="NM_128282.1"/>
</dbReference>
<dbReference type="SMR" id="Q9XIN1"/>
<dbReference type="STRING" id="3702.Q9XIN1"/>
<dbReference type="iPTMnet" id="Q9XIN1"/>
<dbReference type="PaxDb" id="3702-AT2G27240.1"/>
<dbReference type="EnsemblPlants" id="AT2G27240.1">
    <property type="protein sequence ID" value="AT2G27240.1"/>
    <property type="gene ID" value="AT2G27240"/>
</dbReference>
<dbReference type="GeneID" id="817266"/>
<dbReference type="Gramene" id="AT2G27240.1">
    <property type="protein sequence ID" value="AT2G27240.1"/>
    <property type="gene ID" value="AT2G27240"/>
</dbReference>
<dbReference type="KEGG" id="ath:AT2G27240"/>
<dbReference type="Araport" id="AT2G27240"/>
<dbReference type="TAIR" id="AT2G27240"/>
<dbReference type="eggNOG" id="KOG4711">
    <property type="taxonomic scope" value="Eukaryota"/>
</dbReference>
<dbReference type="HOGENOM" id="CLU_020841_2_2_1"/>
<dbReference type="InParanoid" id="Q9XIN1"/>
<dbReference type="OMA" id="DDAHVHS"/>
<dbReference type="PhylomeDB" id="Q9XIN1"/>
<dbReference type="PRO" id="PR:Q9XIN1"/>
<dbReference type="Proteomes" id="UP000006548">
    <property type="component" value="Chromosome 2"/>
</dbReference>
<dbReference type="ExpressionAtlas" id="Q9XIN1">
    <property type="expression patterns" value="baseline and differential"/>
</dbReference>
<dbReference type="GO" id="GO:0016020">
    <property type="term" value="C:membrane"/>
    <property type="evidence" value="ECO:0007669"/>
    <property type="project" value="UniProtKB-SubCell"/>
</dbReference>
<dbReference type="GO" id="GO:0015743">
    <property type="term" value="P:malate transport"/>
    <property type="evidence" value="ECO:0007669"/>
    <property type="project" value="InterPro"/>
</dbReference>
<dbReference type="GO" id="GO:0034220">
    <property type="term" value="P:monoatomic ion transmembrane transport"/>
    <property type="evidence" value="ECO:0007669"/>
    <property type="project" value="UniProtKB-KW"/>
</dbReference>
<dbReference type="InterPro" id="IPR020966">
    <property type="entry name" value="ALMT"/>
</dbReference>
<dbReference type="PANTHER" id="PTHR31086">
    <property type="entry name" value="ALUMINUM-ACTIVATED MALATE TRANSPORTER 10"/>
    <property type="match status" value="1"/>
</dbReference>
<dbReference type="Pfam" id="PF11744">
    <property type="entry name" value="ALMT"/>
    <property type="match status" value="1"/>
</dbReference>
<keyword id="KW-0407">Ion channel</keyword>
<keyword id="KW-0406">Ion transport</keyword>
<keyword id="KW-0472">Membrane</keyword>
<keyword id="KW-1185">Reference proteome</keyword>
<keyword id="KW-0812">Transmembrane</keyword>
<keyword id="KW-1133">Transmembrane helix</keyword>
<keyword id="KW-0813">Transport</keyword>
<gene>
    <name type="primary">ALMT7</name>
    <name type="ordered locus">At2g27240</name>
    <name type="ORF">F12K2.18</name>
</gene>
<reference key="1">
    <citation type="journal article" date="1999" name="Nature">
        <title>Sequence and analysis of chromosome 2 of the plant Arabidopsis thaliana.</title>
        <authorList>
            <person name="Lin X."/>
            <person name="Kaul S."/>
            <person name="Rounsley S.D."/>
            <person name="Shea T.P."/>
            <person name="Benito M.-I."/>
            <person name="Town C.D."/>
            <person name="Fujii C.Y."/>
            <person name="Mason T.M."/>
            <person name="Bowman C.L."/>
            <person name="Barnstead M.E."/>
            <person name="Feldblyum T.V."/>
            <person name="Buell C.R."/>
            <person name="Ketchum K.A."/>
            <person name="Lee J.J."/>
            <person name="Ronning C.M."/>
            <person name="Koo H.L."/>
            <person name="Moffat K.S."/>
            <person name="Cronin L.A."/>
            <person name="Shen M."/>
            <person name="Pai G."/>
            <person name="Van Aken S."/>
            <person name="Umayam L."/>
            <person name="Tallon L.J."/>
            <person name="Gill J.E."/>
            <person name="Adams M.D."/>
            <person name="Carrera A.J."/>
            <person name="Creasy T.H."/>
            <person name="Goodman H.M."/>
            <person name="Somerville C.R."/>
            <person name="Copenhaver G.P."/>
            <person name="Preuss D."/>
            <person name="Nierman W.C."/>
            <person name="White O."/>
            <person name="Eisen J.A."/>
            <person name="Salzberg S.L."/>
            <person name="Fraser C.M."/>
            <person name="Venter J.C."/>
        </authorList>
    </citation>
    <scope>NUCLEOTIDE SEQUENCE [LARGE SCALE GENOMIC DNA]</scope>
    <source>
        <strain>cv. Columbia</strain>
    </source>
</reference>
<reference key="2">
    <citation type="journal article" date="2017" name="Plant J.">
        <title>Araport11: a complete reannotation of the Arabidopsis thaliana reference genome.</title>
        <authorList>
            <person name="Cheng C.Y."/>
            <person name="Krishnakumar V."/>
            <person name="Chan A.P."/>
            <person name="Thibaud-Nissen F."/>
            <person name="Schobel S."/>
            <person name="Town C.D."/>
        </authorList>
    </citation>
    <scope>GENOME REANNOTATION</scope>
    <source>
        <strain>cv. Columbia</strain>
    </source>
</reference>
<reference key="3">
    <citation type="journal article" date="2006" name="Proc. Natl. Acad. Sci. U.S.A.">
        <title>AtALMT1, which encodes a malate transporter, is identified as one of several genes critical for aluminum tolerance in Arabidopsis.</title>
        <authorList>
            <person name="Hoekenga O.A."/>
            <person name="Maron L.G."/>
            <person name="Pineros M.A."/>
            <person name="Cancado G.M."/>
            <person name="Shaff J."/>
            <person name="Kobayashi Y."/>
            <person name="Ryan P.R."/>
            <person name="Dong B."/>
            <person name="Delhaize E."/>
            <person name="Sasaki T."/>
            <person name="Matsumoto H."/>
            <person name="Yamamoto Y."/>
            <person name="Koyama H."/>
            <person name="Kochian L.V."/>
        </authorList>
    </citation>
    <scope>GENE FAMILY</scope>
    <scope>NOMENCLATURE</scope>
</reference>
<evidence type="ECO:0000250" key="1"/>
<evidence type="ECO:0000255" key="2"/>
<evidence type="ECO:0000256" key="3">
    <source>
        <dbReference type="SAM" id="MobiDB-lite"/>
    </source>
</evidence>
<evidence type="ECO:0000305" key="4"/>
<proteinExistence type="inferred from homology"/>
<protein>
    <recommendedName>
        <fullName>Aluminum-activated malate transporter 7</fullName>
        <shortName>AtALMT7</shortName>
    </recommendedName>
</protein>
<sequence length="506" mass="56574">MEKVREIVREGRRVAKEDPRRVVHSFKVGLVLALVSSFYYYQPLYDSFGVNAMWAVMTVVVVFEFSVGATLGKGLNRVAATLFAGGLGIGAHHLASMSGPTGEPILLAVFVFVQAALSTFVRFFPRVKARYDYSLLIFILTFALISVSGFREEQVVKLTHKRISTVIIGGLSCVIISIFVCPVWAGQDLHSLIASNFEKLSFFLLGNSFHYVSSDLNSITLLRKIKSWRLADFGDKYCEVVENDGAKEVDKRKKDFDNYKSVLNSKSNEESLANFAKWEPGHGQFRFRHPWKQYLAVGELIRQCAYRIHALNSYLNADNQVSVDIKKKLGEPLRRMSLESGKAMKEMSISLKKMTKPSSSDLHVQNAKSACKSLTNLLNSGILKEVEPLELVSLLTAISLLIDIINLTEKILESLHELATAAKFKNKIEHPLFSEKPKAKSFVSVRSIKCHDDHVVIIIEDDGNNDDTSKNDNGSKEVSIHEKHEDDDTHVDARCVSCGHTSVCVK</sequence>
<name>ALMT7_ARATH</name>
<organism>
    <name type="scientific">Arabidopsis thaliana</name>
    <name type="common">Mouse-ear cress</name>
    <dbReference type="NCBI Taxonomy" id="3702"/>
    <lineage>
        <taxon>Eukaryota</taxon>
        <taxon>Viridiplantae</taxon>
        <taxon>Streptophyta</taxon>
        <taxon>Embryophyta</taxon>
        <taxon>Tracheophyta</taxon>
        <taxon>Spermatophyta</taxon>
        <taxon>Magnoliopsida</taxon>
        <taxon>eudicotyledons</taxon>
        <taxon>Gunneridae</taxon>
        <taxon>Pentapetalae</taxon>
        <taxon>rosids</taxon>
        <taxon>malvids</taxon>
        <taxon>Brassicales</taxon>
        <taxon>Brassicaceae</taxon>
        <taxon>Camelineae</taxon>
        <taxon>Arabidopsis</taxon>
    </lineage>
</organism>